<accession>Q6DNK1</accession>
<proteinExistence type="inferred from homology"/>
<organismHost>
    <name type="scientific">Aves</name>
    <dbReference type="NCBI Taxonomy" id="8782"/>
</organismHost>
<organismHost>
    <name type="scientific">Felis catus</name>
    <name type="common">Cat</name>
    <name type="synonym">Felis silvestris catus</name>
    <dbReference type="NCBI Taxonomy" id="9685"/>
</organismHost>
<organismHost>
    <name type="scientific">Homo sapiens</name>
    <name type="common">Human</name>
    <dbReference type="NCBI Taxonomy" id="9606"/>
</organismHost>
<organismHost>
    <name type="scientific">Panthera pardus</name>
    <name type="common">Leopard</name>
    <name type="synonym">Felis pardus</name>
    <dbReference type="NCBI Taxonomy" id="9691"/>
</organismHost>
<organismHost>
    <name type="scientific">Panthera tigris</name>
    <name type="common">Tiger</name>
    <dbReference type="NCBI Taxonomy" id="9694"/>
</organismHost>
<organismHost>
    <name type="scientific">Sus scrofa</name>
    <name type="common">Pig</name>
    <dbReference type="NCBI Taxonomy" id="9823"/>
</organismHost>
<dbReference type="EMBL" id="AY651751">
    <property type="protein sequence ID" value="AAT73582.2"/>
    <property type="molecule type" value="Genomic_RNA"/>
</dbReference>
<dbReference type="SMR" id="Q6DNK1"/>
<dbReference type="GO" id="GO:0042025">
    <property type="term" value="C:host cell nucleus"/>
    <property type="evidence" value="ECO:0007669"/>
    <property type="project" value="UniProtKB-SubCell"/>
</dbReference>
<dbReference type="GO" id="GO:0044423">
    <property type="term" value="C:virion component"/>
    <property type="evidence" value="ECO:0007669"/>
    <property type="project" value="UniProtKB-UniRule"/>
</dbReference>
<dbReference type="GO" id="GO:0003723">
    <property type="term" value="F:RNA binding"/>
    <property type="evidence" value="ECO:0007669"/>
    <property type="project" value="UniProtKB-UniRule"/>
</dbReference>
<dbReference type="GO" id="GO:0003968">
    <property type="term" value="F:RNA-directed RNA polymerase activity"/>
    <property type="evidence" value="ECO:0007669"/>
    <property type="project" value="UniProtKB-UniRule"/>
</dbReference>
<dbReference type="GO" id="GO:0006370">
    <property type="term" value="P:7-methylguanosine mRNA capping"/>
    <property type="evidence" value="ECO:0007669"/>
    <property type="project" value="UniProtKB-UniRule"/>
</dbReference>
<dbReference type="GO" id="GO:0075526">
    <property type="term" value="P:cap snatching"/>
    <property type="evidence" value="ECO:0007669"/>
    <property type="project" value="UniProtKB-UniRule"/>
</dbReference>
<dbReference type="GO" id="GO:0006351">
    <property type="term" value="P:DNA-templated transcription"/>
    <property type="evidence" value="ECO:0007669"/>
    <property type="project" value="UniProtKB-UniRule"/>
</dbReference>
<dbReference type="GO" id="GO:0039657">
    <property type="term" value="P:symbiont-mediated suppression of host gene expression"/>
    <property type="evidence" value="ECO:0007669"/>
    <property type="project" value="UniProtKB-KW"/>
</dbReference>
<dbReference type="GO" id="GO:0039523">
    <property type="term" value="P:symbiont-mediated suppression of host mRNA transcription via inhibition of RNA polymerase II activity"/>
    <property type="evidence" value="ECO:0007669"/>
    <property type="project" value="UniProtKB-UniRule"/>
</dbReference>
<dbReference type="GO" id="GO:0039694">
    <property type="term" value="P:viral RNA genome replication"/>
    <property type="evidence" value="ECO:0007669"/>
    <property type="project" value="InterPro"/>
</dbReference>
<dbReference type="FunFam" id="3.30.30.90:FF:000001">
    <property type="entry name" value="Polymerase basic protein 2"/>
    <property type="match status" value="1"/>
</dbReference>
<dbReference type="Gene3D" id="3.30.30.90">
    <property type="entry name" value="Polymerase Basic Protein 2, C-terminal domain"/>
    <property type="match status" value="1"/>
</dbReference>
<dbReference type="HAMAP" id="MF_04062">
    <property type="entry name" value="INV_PB2"/>
    <property type="match status" value="1"/>
</dbReference>
<dbReference type="InterPro" id="IPR049110">
    <property type="entry name" value="Flu_PB2_2nd"/>
</dbReference>
<dbReference type="InterPro" id="IPR049114">
    <property type="entry name" value="Flu_PB2_6th"/>
</dbReference>
<dbReference type="InterPro" id="IPR049115">
    <property type="entry name" value="Flu_PB2_C"/>
</dbReference>
<dbReference type="InterPro" id="IPR048298">
    <property type="entry name" value="Flu_PB2_CAP-bd"/>
</dbReference>
<dbReference type="InterPro" id="IPR049111">
    <property type="entry name" value="Flu_PB2_middle"/>
</dbReference>
<dbReference type="InterPro" id="IPR049106">
    <property type="entry name" value="Flu_PB2_N"/>
</dbReference>
<dbReference type="InterPro" id="IPR001591">
    <property type="entry name" value="INV_PB2"/>
</dbReference>
<dbReference type="InterPro" id="IPR049113">
    <property type="entry name" value="PB2_helical"/>
</dbReference>
<dbReference type="InterPro" id="IPR037258">
    <property type="entry name" value="PDB2_C"/>
</dbReference>
<dbReference type="Pfam" id="PF20947">
    <property type="entry name" value="Flu_PB2_1st"/>
    <property type="match status" value="1"/>
</dbReference>
<dbReference type="Pfam" id="PF20948">
    <property type="entry name" value="Flu_PB2_2nd"/>
    <property type="match status" value="1"/>
</dbReference>
<dbReference type="Pfam" id="PF20949">
    <property type="entry name" value="Flu_PB2_3rd"/>
    <property type="match status" value="1"/>
</dbReference>
<dbReference type="Pfam" id="PF20950">
    <property type="entry name" value="Flu_PB2_4th"/>
    <property type="match status" value="1"/>
</dbReference>
<dbReference type="Pfam" id="PF00604">
    <property type="entry name" value="Flu_PB2_5th"/>
    <property type="match status" value="1"/>
</dbReference>
<dbReference type="Pfam" id="PF20951">
    <property type="entry name" value="Flu_PB2_6th"/>
    <property type="match status" value="1"/>
</dbReference>
<dbReference type="Pfam" id="PF20952">
    <property type="entry name" value="Flu_PB2_7th"/>
    <property type="match status" value="1"/>
</dbReference>
<dbReference type="SUPFAM" id="SSF160453">
    <property type="entry name" value="PB2 C-terminal domain-like"/>
    <property type="match status" value="1"/>
</dbReference>
<name>PB2_I03A1</name>
<sequence>MERIKELRDLMSQSRTREILTKTTVDHMAIIKKYTSGRQEKNPALRMKWMMAMKYPITADKRIIEMVPERNEQGQTLWSKTNDAGSDRVMVSPLAVTWWNRNGPTTSAVHYPKVYKTYFEKVERLKHGTFGPVHFRNQVKIRRRVDINPGHADLSAKEAQDVIMEVVFPNEVGARILTSESQLTITKEKKEELQDCKIAPLMVAYMLERELVRKTRFLPVSGGTSSVYIEVLHLTQGTCWEQMYTPGGEVRNDDVDQSLIIAARNIVRRATVSADPLASLLEMCHSTQIGGIRMVDILRQNPTEEQAVNICKAAMGLRISSSFSFGGFTFKRTSGSSFTKEEEVLTGNLQTLKIRVHEGYEEFTMVGRRATAILRKATRRLIQLIVSGRDEQSIAEAIIVAMVFSQEDCMIKAVRGDLNFVNRANQRLNPMHQLLRHFQKDAKVLFQNWGIEPIDNVMGMIGVLPDMTPSTEVSLRGVRVSKMGVDEYSSTERVVVSIDRFLRVRDQRGNVLLSPEEVSETQGTEKLTITYSSSMMWEINGPESVLVNTYQWIIRNWETVKIQWSQDPTMLYNKMEFEPFQSLVPKAARGQYSGFVRTLFQQMRDVLGTFDTVQIIKLLPFAAAPPEQSRMQFSSLTVNVRGSGMRILVRGNSPVFNYNKATKRLTILGKDAGALTEDPNEGTAGVESAVLRGFLILGKEDKRYGPALSINELSNLAKGEKANVLIGQGDVVLVMKRKRDSSILTDSQTATKRIRMAIN</sequence>
<keyword id="KW-1157">Cap snatching</keyword>
<keyword id="KW-1262">Eukaryotic host gene expression shutoff by virus</keyword>
<keyword id="KW-1191">Eukaryotic host transcription shutoff by virus</keyword>
<keyword id="KW-1190">Host gene expression shutoff by virus</keyword>
<keyword id="KW-1048">Host nucleus</keyword>
<keyword id="KW-0945">Host-virus interaction</keyword>
<keyword id="KW-1104">Inhibition of host RNA polymerase II by virus</keyword>
<keyword id="KW-0506">mRNA capping</keyword>
<keyword id="KW-0507">mRNA processing</keyword>
<keyword id="KW-1195">Viral transcription</keyword>
<keyword id="KW-0946">Virion</keyword>
<organism>
    <name type="scientific">Influenza A virus (strain A/Chicken/Shantou/4231/2003 H5N1 genotype V)</name>
    <dbReference type="NCBI Taxonomy" id="284184"/>
    <lineage>
        <taxon>Viruses</taxon>
        <taxon>Riboviria</taxon>
        <taxon>Orthornavirae</taxon>
        <taxon>Negarnaviricota</taxon>
        <taxon>Polyploviricotina</taxon>
        <taxon>Insthoviricetes</taxon>
        <taxon>Articulavirales</taxon>
        <taxon>Orthomyxoviridae</taxon>
        <taxon>Alphainfluenzavirus</taxon>
        <taxon>Alphainfluenzavirus influenzae</taxon>
        <taxon>Influenza A virus</taxon>
    </lineage>
</organism>
<comment type="function">
    <text evidence="1">Plays an essential role in transcription initiation and cap-stealing mechanism, in which cellular capped pre-mRNAs are used to generate primers for viral transcription. Recognizes and binds the 7-methylguanosine-containing cap of the target pre-RNA which is subsequently cleaved after 10-13 nucleotides by the viral protein PA. Plays a role in the initiation of the viral genome replication and modulates the activity of the ribonucleoprotein (RNP) complex.</text>
</comment>
<comment type="subunit">
    <text evidence="1">Influenza RNA polymerase is composed of three subunits: PB1, PB2 and PA. Interacts (via N-terminus) with PB1 (via C-terminus). Interacts with nucleoprotein NP (via N-terminus).</text>
</comment>
<comment type="subcellular location">
    <subcellularLocation>
        <location evidence="1">Virion</location>
    </subcellularLocation>
    <subcellularLocation>
        <location evidence="1">Host nucleus</location>
    </subcellularLocation>
</comment>
<comment type="similarity">
    <text evidence="1">Belongs to the influenza viruses PB2 family.</text>
</comment>
<protein>
    <recommendedName>
        <fullName evidence="1">Polymerase basic protein 2</fullName>
    </recommendedName>
    <alternativeName>
        <fullName evidence="1">RNA-directed RNA polymerase subunit P3</fullName>
    </alternativeName>
</protein>
<gene>
    <name evidence="1" type="primary">PB2</name>
</gene>
<reference key="1">
    <citation type="journal article" date="2004" name="Nature">
        <title>Genesis of a highly pathogenic and potentially pandemic H5N1 influenza virus in eastern Asia.</title>
        <authorList>
            <person name="Li K.S."/>
            <person name="Guan Y."/>
            <person name="Wang J."/>
            <person name="Smith G.J.D."/>
            <person name="Xu K.M."/>
            <person name="Duan L."/>
            <person name="Rahardjo A.P."/>
            <person name="Puthavathana P."/>
            <person name="Buranathai C."/>
            <person name="Nguyen T.D."/>
            <person name="Estoepangestie A.T.S."/>
            <person name="Chaisingh A."/>
            <person name="Auewarakul P."/>
            <person name="Long H.T."/>
            <person name="Hanh N.T.H."/>
            <person name="Webby R.J."/>
            <person name="Poon L.L.M."/>
            <person name="Chen H."/>
            <person name="Shortridge K.F."/>
            <person name="Yuen K.Y."/>
            <person name="Webster R.G."/>
            <person name="Peiris J.S.M."/>
        </authorList>
    </citation>
    <scope>NUCLEOTIDE SEQUENCE [GENOMIC RNA]</scope>
</reference>
<reference key="2">
    <citation type="submission" date="2008-03" db="EMBL/GenBank/DDBJ databases">
        <authorList>
            <person name="Li K.S."/>
            <person name="Guan Y."/>
            <person name="Wang J."/>
            <person name="Smith G.J.D."/>
            <person name="Xu K.M."/>
            <person name="Duan L."/>
            <person name="Rahardjo A.P."/>
            <person name="Puthavathana P."/>
            <person name="Buranathai C."/>
            <person name="Nguyen T.D."/>
            <person name="Estoepangestie A.T.S."/>
            <person name="Chaisingh A."/>
            <person name="Auewarakul P."/>
            <person name="Long H.T."/>
            <person name="Hanh N.T.H."/>
            <person name="Lim W."/>
            <person name="Webby R.J."/>
            <person name="Poon L.L.M."/>
            <person name="Chen H."/>
            <person name="Shortridge K.F."/>
            <person name="Yuen K.Y."/>
            <person name="Webster R.G."/>
            <person name="Peiris J.S.M."/>
        </authorList>
    </citation>
    <scope>SEQUENCE REVISION</scope>
</reference>
<evidence type="ECO:0000255" key="1">
    <source>
        <dbReference type="HAMAP-Rule" id="MF_04062"/>
    </source>
</evidence>
<feature type="chain" id="PRO_0000311156" description="Polymerase basic protein 2">
    <location>
        <begin position="1"/>
        <end position="759"/>
    </location>
</feature>
<feature type="short sequence motif" description="Nuclear localization signal" evidence="1">
    <location>
        <begin position="736"/>
        <end position="739"/>
    </location>
</feature>
<feature type="site" description="Avian adaptation" evidence="1">
    <location>
        <position position="627"/>
    </location>
</feature>